<protein>
    <recommendedName>
        <fullName>ATP-dependent RNA helicase DHH1</fullName>
        <ecNumber>3.6.4.13</ecNumber>
    </recommendedName>
</protein>
<keyword id="KW-0067">ATP-binding</keyword>
<keyword id="KW-0963">Cytoplasm</keyword>
<keyword id="KW-0347">Helicase</keyword>
<keyword id="KW-0378">Hydrolase</keyword>
<keyword id="KW-0507">mRNA processing</keyword>
<keyword id="KW-0509">mRNA transport</keyword>
<keyword id="KW-0547">Nucleotide-binding</keyword>
<keyword id="KW-1185">Reference proteome</keyword>
<keyword id="KW-0694">RNA-binding</keyword>
<keyword id="KW-0810">Translation regulation</keyword>
<keyword id="KW-0813">Transport</keyword>
<reference key="1">
    <citation type="journal article" date="2004" name="Proc. Natl. Acad. Sci. U.S.A.">
        <title>The diploid genome sequence of Candida albicans.</title>
        <authorList>
            <person name="Jones T."/>
            <person name="Federspiel N.A."/>
            <person name="Chibana H."/>
            <person name="Dungan J."/>
            <person name="Kalman S."/>
            <person name="Magee B.B."/>
            <person name="Newport G."/>
            <person name="Thorstenson Y.R."/>
            <person name="Agabian N."/>
            <person name="Magee P.T."/>
            <person name="Davis R.W."/>
            <person name="Scherer S."/>
        </authorList>
    </citation>
    <scope>NUCLEOTIDE SEQUENCE [LARGE SCALE GENOMIC DNA]</scope>
    <source>
        <strain>SC5314 / ATCC MYA-2876</strain>
    </source>
</reference>
<reference key="2">
    <citation type="journal article" date="2007" name="Genome Biol.">
        <title>Assembly of the Candida albicans genome into sixteen supercontigs aligned on the eight chromosomes.</title>
        <authorList>
            <person name="van het Hoog M."/>
            <person name="Rast T.J."/>
            <person name="Martchenko M."/>
            <person name="Grindle S."/>
            <person name="Dignard D."/>
            <person name="Hogues H."/>
            <person name="Cuomo C."/>
            <person name="Berriman M."/>
            <person name="Scherer S."/>
            <person name="Magee B.B."/>
            <person name="Whiteway M."/>
            <person name="Chibana H."/>
            <person name="Nantel A."/>
            <person name="Magee P.T."/>
        </authorList>
    </citation>
    <scope>GENOME REANNOTATION</scope>
    <source>
        <strain>SC5314 / ATCC MYA-2876</strain>
    </source>
</reference>
<reference key="3">
    <citation type="journal article" date="2013" name="Genome Biol.">
        <title>Assembly of a phased diploid Candida albicans genome facilitates allele-specific measurements and provides a simple model for repeat and indel structure.</title>
        <authorList>
            <person name="Muzzey D."/>
            <person name="Schwartz K."/>
            <person name="Weissman J.S."/>
            <person name="Sherlock G."/>
        </authorList>
    </citation>
    <scope>NUCLEOTIDE SEQUENCE [LARGE SCALE GENOMIC DNA]</scope>
    <scope>GENOME REANNOTATION</scope>
    <source>
        <strain>SC5314 / ATCC MYA-2876</strain>
    </source>
</reference>
<comment type="function">
    <text evidence="1">ATP-dependent RNA helicase involved in mRNA turnover, and more specifically in mRNA decapping. Is involved in G1/S DNA-damage checkpoint recovery, probably through the regulation of the translational status of a subset of mRNAs. May also have a role in translation and mRNA nuclear export (By similarity).</text>
</comment>
<comment type="catalytic activity">
    <reaction>
        <text>ATP + H2O = ADP + phosphate + H(+)</text>
        <dbReference type="Rhea" id="RHEA:13065"/>
        <dbReference type="ChEBI" id="CHEBI:15377"/>
        <dbReference type="ChEBI" id="CHEBI:15378"/>
        <dbReference type="ChEBI" id="CHEBI:30616"/>
        <dbReference type="ChEBI" id="CHEBI:43474"/>
        <dbReference type="ChEBI" id="CHEBI:456216"/>
        <dbReference type="EC" id="3.6.4.13"/>
    </reaction>
</comment>
<comment type="subcellular location">
    <subcellularLocation>
        <location evidence="1">Cytoplasm</location>
        <location evidence="1">P-body</location>
    </subcellularLocation>
    <text evidence="1">Is concentrated in several cytoplasmic foci called P bodies (or cytoplasmic processing bodies) which represent sites of mRNA decapping and 5' to 3' exonucleotidic decay.</text>
</comment>
<comment type="domain">
    <text>The Q motif is unique to and characteristic of the DEAD box family of RNA helicases and controls ATP binding and hydrolysis.</text>
</comment>
<comment type="similarity">
    <text evidence="5">Belongs to the DEAD box helicase family. DDX6/DHH1 subfamily.</text>
</comment>
<accession>Q5AAW3</accession>
<accession>A0A1D8PE02</accession>
<feature type="chain" id="PRO_0000232186" description="ATP-dependent RNA helicase DHH1">
    <location>
        <begin position="1"/>
        <end position="549"/>
    </location>
</feature>
<feature type="domain" description="Helicase ATP-binding" evidence="2">
    <location>
        <begin position="61"/>
        <end position="231"/>
    </location>
</feature>
<feature type="domain" description="Helicase C-terminal" evidence="3">
    <location>
        <begin position="241"/>
        <end position="401"/>
    </location>
</feature>
<feature type="region of interest" description="Disordered" evidence="4">
    <location>
        <begin position="1"/>
        <end position="24"/>
    </location>
</feature>
<feature type="region of interest" description="Disordered" evidence="4">
    <location>
        <begin position="414"/>
        <end position="549"/>
    </location>
</feature>
<feature type="short sequence motif" description="Q motif">
    <location>
        <begin position="30"/>
        <end position="58"/>
    </location>
</feature>
<feature type="short sequence motif" description="DEAD box">
    <location>
        <begin position="179"/>
        <end position="182"/>
    </location>
</feature>
<feature type="compositionally biased region" description="Polar residues" evidence="4">
    <location>
        <begin position="1"/>
        <end position="11"/>
    </location>
</feature>
<feature type="compositionally biased region" description="Basic and acidic residues" evidence="4">
    <location>
        <begin position="414"/>
        <end position="427"/>
    </location>
</feature>
<feature type="compositionally biased region" description="Low complexity" evidence="4">
    <location>
        <begin position="445"/>
        <end position="482"/>
    </location>
</feature>
<feature type="compositionally biased region" description="Low complexity" evidence="4">
    <location>
        <begin position="496"/>
        <end position="512"/>
    </location>
</feature>
<feature type="compositionally biased region" description="Low complexity" evidence="4">
    <location>
        <begin position="533"/>
        <end position="549"/>
    </location>
</feature>
<feature type="binding site" evidence="2">
    <location>
        <begin position="74"/>
        <end position="81"/>
    </location>
    <ligand>
        <name>ATP</name>
        <dbReference type="ChEBI" id="CHEBI:30616"/>
    </ligand>
</feature>
<proteinExistence type="inferred from homology"/>
<sequence>MTDTNWKQNLNLPPKDTRPQTEDVLNTKGKSFEDFNLKRELLMGIFEAGFEKPSPIQEESIPMALAGRDILARAKNGTGKTASFIIPCLQLVKPKLNKVQALILVPTRELALQTSQVVRTLGKHVGTQCMVTTGGTSLRDDIVRLHDPVHILVGTPGRVLDLAARKVVDLSECPLFVMDEADKMLSREFKGIIEQILEFFPPNRQALLFSATFPLAVKSFMDKHLTKPYEINLMDELTLKGISQFYAFVEEKQKLHCLNTLFSKLQINQSIIFCNSTNRVELLAKKITELGYSCYYSHAKMPQQARNKVFHEFRQGKVRNLVCSDLLTRGIDIQAVNVVINFDFPKTAETYLHRIGRSGRFGHLGLAINLMSWNDRYSLYKIEQELGTEIKPIPATIDKSLYVAENADAVPRPFRIDELPKGNETVHNKGYQYKGQPVKDENSGSSSQQQQQPPPQQQQQQSTSPPQQQPQQQQQQPNPQHQFAPHPNGQFPPYPQQFHQPGAIPPQQFNGYPPYPQYPPQFAGYPGQPPQLPQGQQQHAQAQNPAQQY</sequence>
<gene>
    <name type="primary">DHH1</name>
    <name type="ordered locus">CAALFM_C107070CA</name>
    <name type="ORF">CaO19.13577</name>
    <name type="ORF">CaO19.6197</name>
</gene>
<name>DHH1_CANAL</name>
<dbReference type="EC" id="3.6.4.13"/>
<dbReference type="EMBL" id="CP017623">
    <property type="protein sequence ID" value="AOW26359.1"/>
    <property type="molecule type" value="Genomic_DNA"/>
</dbReference>
<dbReference type="RefSeq" id="XP_718788.1">
    <property type="nucleotide sequence ID" value="XM_713695.1"/>
</dbReference>
<dbReference type="SMR" id="Q5AAW3"/>
<dbReference type="BioGRID" id="1222584">
    <property type="interactions" value="1"/>
</dbReference>
<dbReference type="FunCoup" id="Q5AAW3">
    <property type="interactions" value="1414"/>
</dbReference>
<dbReference type="STRING" id="237561.Q5AAW3"/>
<dbReference type="EnsemblFungi" id="C1_07070C_A-T">
    <property type="protein sequence ID" value="C1_07070C_A-T-p1"/>
    <property type="gene ID" value="C1_07070C_A"/>
</dbReference>
<dbReference type="GeneID" id="3639490"/>
<dbReference type="KEGG" id="cal:CAALFM_C107070CA"/>
<dbReference type="CGD" id="CAL0000182112">
    <property type="gene designation" value="DHH1"/>
</dbReference>
<dbReference type="VEuPathDB" id="FungiDB:C1_07070C_A"/>
<dbReference type="eggNOG" id="KOG0326">
    <property type="taxonomic scope" value="Eukaryota"/>
</dbReference>
<dbReference type="HOGENOM" id="CLU_003041_30_2_1"/>
<dbReference type="InParanoid" id="Q5AAW3"/>
<dbReference type="OMA" id="TYEDRHT"/>
<dbReference type="OrthoDB" id="10265785at2759"/>
<dbReference type="PRO" id="PR:Q5AAW3"/>
<dbReference type="Proteomes" id="UP000000559">
    <property type="component" value="Chromosome 1"/>
</dbReference>
<dbReference type="GO" id="GO:0098562">
    <property type="term" value="C:cytoplasmic side of membrane"/>
    <property type="evidence" value="ECO:0007669"/>
    <property type="project" value="EnsemblFungi"/>
</dbReference>
<dbReference type="GO" id="GO:0010494">
    <property type="term" value="C:cytoplasmic stress granule"/>
    <property type="evidence" value="ECO:0000314"/>
    <property type="project" value="CGD"/>
</dbReference>
<dbReference type="GO" id="GO:0000932">
    <property type="term" value="C:P-body"/>
    <property type="evidence" value="ECO:0000318"/>
    <property type="project" value="GO_Central"/>
</dbReference>
<dbReference type="GO" id="GO:0005524">
    <property type="term" value="F:ATP binding"/>
    <property type="evidence" value="ECO:0007669"/>
    <property type="project" value="UniProtKB-KW"/>
</dbReference>
<dbReference type="GO" id="GO:0016887">
    <property type="term" value="F:ATP hydrolysis activity"/>
    <property type="evidence" value="ECO:0007669"/>
    <property type="project" value="EnsemblFungi"/>
</dbReference>
<dbReference type="GO" id="GO:0003682">
    <property type="term" value="F:chromatin binding"/>
    <property type="evidence" value="ECO:0007669"/>
    <property type="project" value="EnsemblFungi"/>
</dbReference>
<dbReference type="GO" id="GO:0003729">
    <property type="term" value="F:mRNA binding"/>
    <property type="evidence" value="ECO:0000318"/>
    <property type="project" value="GO_Central"/>
</dbReference>
<dbReference type="GO" id="GO:0003724">
    <property type="term" value="F:RNA helicase activity"/>
    <property type="evidence" value="ECO:0007669"/>
    <property type="project" value="UniProtKB-EC"/>
</dbReference>
<dbReference type="GO" id="GO:0042149">
    <property type="term" value="P:cellular response to glucose starvation"/>
    <property type="evidence" value="ECO:0007669"/>
    <property type="project" value="EnsemblFungi"/>
</dbReference>
<dbReference type="GO" id="GO:0006995">
    <property type="term" value="P:cellular response to nitrogen starvation"/>
    <property type="evidence" value="ECO:0007669"/>
    <property type="project" value="EnsemblFungi"/>
</dbReference>
<dbReference type="GO" id="GO:0000290">
    <property type="term" value="P:deadenylation-dependent decapping of nuclear-transcribed mRNA"/>
    <property type="evidence" value="ECO:0007669"/>
    <property type="project" value="EnsemblFungi"/>
</dbReference>
<dbReference type="GO" id="GO:0036267">
    <property type="term" value="P:invasive filamentous growth"/>
    <property type="evidence" value="ECO:0007669"/>
    <property type="project" value="EnsemblFungi"/>
</dbReference>
<dbReference type="GO" id="GO:0006397">
    <property type="term" value="P:mRNA processing"/>
    <property type="evidence" value="ECO:0007669"/>
    <property type="project" value="UniProtKB-KW"/>
</dbReference>
<dbReference type="GO" id="GO:0051028">
    <property type="term" value="P:mRNA transport"/>
    <property type="evidence" value="ECO:0007669"/>
    <property type="project" value="UniProtKB-KW"/>
</dbReference>
<dbReference type="GO" id="GO:0017148">
    <property type="term" value="P:negative regulation of translation"/>
    <property type="evidence" value="ECO:0000318"/>
    <property type="project" value="GO_Central"/>
</dbReference>
<dbReference type="GO" id="GO:0045900">
    <property type="term" value="P:negative regulation of translational elongation"/>
    <property type="evidence" value="ECO:0007669"/>
    <property type="project" value="EnsemblFungi"/>
</dbReference>
<dbReference type="GO" id="GO:0033962">
    <property type="term" value="P:P-body assembly"/>
    <property type="evidence" value="ECO:0000318"/>
    <property type="project" value="GO_Central"/>
</dbReference>
<dbReference type="GO" id="GO:0045727">
    <property type="term" value="P:positive regulation of translation"/>
    <property type="evidence" value="ECO:0007669"/>
    <property type="project" value="EnsemblFungi"/>
</dbReference>
<dbReference type="GO" id="GO:0007124">
    <property type="term" value="P:pseudohyphal growth"/>
    <property type="evidence" value="ECO:0007669"/>
    <property type="project" value="EnsemblFungi"/>
</dbReference>
<dbReference type="GO" id="GO:0010603">
    <property type="term" value="P:regulation of cytoplasmic mRNA processing body assembly"/>
    <property type="evidence" value="ECO:0007669"/>
    <property type="project" value="EnsemblFungi"/>
</dbReference>
<dbReference type="GO" id="GO:0000749">
    <property type="term" value="P:response to pheromone triggering conjugation with cellular fusion"/>
    <property type="evidence" value="ECO:0007669"/>
    <property type="project" value="EnsemblFungi"/>
</dbReference>
<dbReference type="GO" id="GO:0034063">
    <property type="term" value="P:stress granule assembly"/>
    <property type="evidence" value="ECO:0000318"/>
    <property type="project" value="GO_Central"/>
</dbReference>
<dbReference type="CDD" id="cd17940">
    <property type="entry name" value="DEADc_DDX6"/>
    <property type="match status" value="1"/>
</dbReference>
<dbReference type="CDD" id="cd18787">
    <property type="entry name" value="SF2_C_DEAD"/>
    <property type="match status" value="1"/>
</dbReference>
<dbReference type="FunFam" id="3.40.50.300:FF:000114">
    <property type="entry name" value="ATP-dependent RNA helicase DDX6"/>
    <property type="match status" value="1"/>
</dbReference>
<dbReference type="FunFam" id="3.40.50.300:FF:000364">
    <property type="entry name" value="ATP-dependent RNA helicase DDX6"/>
    <property type="match status" value="1"/>
</dbReference>
<dbReference type="Gene3D" id="3.40.50.300">
    <property type="entry name" value="P-loop containing nucleotide triphosphate hydrolases"/>
    <property type="match status" value="2"/>
</dbReference>
<dbReference type="InterPro" id="IPR011545">
    <property type="entry name" value="DEAD/DEAH_box_helicase_dom"/>
</dbReference>
<dbReference type="InterPro" id="IPR014001">
    <property type="entry name" value="Helicase_ATP-bd"/>
</dbReference>
<dbReference type="InterPro" id="IPR001650">
    <property type="entry name" value="Helicase_C-like"/>
</dbReference>
<dbReference type="InterPro" id="IPR027417">
    <property type="entry name" value="P-loop_NTPase"/>
</dbReference>
<dbReference type="InterPro" id="IPR000629">
    <property type="entry name" value="RNA-helicase_DEAD-box_CS"/>
</dbReference>
<dbReference type="InterPro" id="IPR014014">
    <property type="entry name" value="RNA_helicase_DEAD_Q_motif"/>
</dbReference>
<dbReference type="PANTHER" id="PTHR47960">
    <property type="entry name" value="DEAD-BOX ATP-DEPENDENT RNA HELICASE 50"/>
    <property type="match status" value="1"/>
</dbReference>
<dbReference type="Pfam" id="PF00270">
    <property type="entry name" value="DEAD"/>
    <property type="match status" value="1"/>
</dbReference>
<dbReference type="Pfam" id="PF00271">
    <property type="entry name" value="Helicase_C"/>
    <property type="match status" value="1"/>
</dbReference>
<dbReference type="SMART" id="SM00487">
    <property type="entry name" value="DEXDc"/>
    <property type="match status" value="1"/>
</dbReference>
<dbReference type="SMART" id="SM00490">
    <property type="entry name" value="HELICc"/>
    <property type="match status" value="1"/>
</dbReference>
<dbReference type="SUPFAM" id="SSF52540">
    <property type="entry name" value="P-loop containing nucleoside triphosphate hydrolases"/>
    <property type="match status" value="1"/>
</dbReference>
<dbReference type="PROSITE" id="PS00039">
    <property type="entry name" value="DEAD_ATP_HELICASE"/>
    <property type="match status" value="1"/>
</dbReference>
<dbReference type="PROSITE" id="PS51192">
    <property type="entry name" value="HELICASE_ATP_BIND_1"/>
    <property type="match status" value="1"/>
</dbReference>
<dbReference type="PROSITE" id="PS51194">
    <property type="entry name" value="HELICASE_CTER"/>
    <property type="match status" value="1"/>
</dbReference>
<dbReference type="PROSITE" id="PS51195">
    <property type="entry name" value="Q_MOTIF"/>
    <property type="match status" value="1"/>
</dbReference>
<organism>
    <name type="scientific">Candida albicans (strain SC5314 / ATCC MYA-2876)</name>
    <name type="common">Yeast</name>
    <dbReference type="NCBI Taxonomy" id="237561"/>
    <lineage>
        <taxon>Eukaryota</taxon>
        <taxon>Fungi</taxon>
        <taxon>Dikarya</taxon>
        <taxon>Ascomycota</taxon>
        <taxon>Saccharomycotina</taxon>
        <taxon>Pichiomycetes</taxon>
        <taxon>Debaryomycetaceae</taxon>
        <taxon>Candida/Lodderomyces clade</taxon>
        <taxon>Candida</taxon>
    </lineage>
</organism>
<evidence type="ECO:0000250" key="1"/>
<evidence type="ECO:0000255" key="2">
    <source>
        <dbReference type="PROSITE-ProRule" id="PRU00541"/>
    </source>
</evidence>
<evidence type="ECO:0000255" key="3">
    <source>
        <dbReference type="PROSITE-ProRule" id="PRU00542"/>
    </source>
</evidence>
<evidence type="ECO:0000256" key="4">
    <source>
        <dbReference type="SAM" id="MobiDB-lite"/>
    </source>
</evidence>
<evidence type="ECO:0000305" key="5"/>